<keyword id="KW-0131">Cell cycle</keyword>
<keyword id="KW-0132">Cell division</keyword>
<keyword id="KW-0133">Cell shape</keyword>
<keyword id="KW-0175">Coiled coil</keyword>
<keyword id="KW-0963">Cytoplasm</keyword>
<dbReference type="EMBL" id="CP001598">
    <property type="protein sequence ID" value="ACQ49095.1"/>
    <property type="molecule type" value="Genomic_DNA"/>
</dbReference>
<dbReference type="RefSeq" id="WP_000622430.1">
    <property type="nucleotide sequence ID" value="NC_012659.1"/>
</dbReference>
<dbReference type="SMR" id="C3P5S9"/>
<dbReference type="GeneID" id="93009481"/>
<dbReference type="KEGG" id="bai:BAA_1649"/>
<dbReference type="HOGENOM" id="CLU_140309_1_0_9"/>
<dbReference type="GO" id="GO:0005737">
    <property type="term" value="C:cytoplasm"/>
    <property type="evidence" value="ECO:0007669"/>
    <property type="project" value="UniProtKB-SubCell"/>
</dbReference>
<dbReference type="GO" id="GO:0051301">
    <property type="term" value="P:cell division"/>
    <property type="evidence" value="ECO:0007669"/>
    <property type="project" value="UniProtKB-UniRule"/>
</dbReference>
<dbReference type="GO" id="GO:0008360">
    <property type="term" value="P:regulation of cell shape"/>
    <property type="evidence" value="ECO:0007669"/>
    <property type="project" value="UniProtKB-UniRule"/>
</dbReference>
<dbReference type="Gene3D" id="6.10.250.660">
    <property type="match status" value="1"/>
</dbReference>
<dbReference type="HAMAP" id="MF_02011">
    <property type="entry name" value="GpsB"/>
    <property type="match status" value="1"/>
</dbReference>
<dbReference type="InterPro" id="IPR011229">
    <property type="entry name" value="Cell_cycle_GpsB"/>
</dbReference>
<dbReference type="InterPro" id="IPR019933">
    <property type="entry name" value="DivIVA_domain"/>
</dbReference>
<dbReference type="InterPro" id="IPR007793">
    <property type="entry name" value="DivIVA_fam"/>
</dbReference>
<dbReference type="NCBIfam" id="TIGR03544">
    <property type="entry name" value="DivI1A_domain"/>
    <property type="match status" value="1"/>
</dbReference>
<dbReference type="NCBIfam" id="NF010725">
    <property type="entry name" value="PRK14127.1"/>
    <property type="match status" value="1"/>
</dbReference>
<dbReference type="PANTHER" id="PTHR35794:SF1">
    <property type="entry name" value="CELL CYCLE PROTEIN GPSB"/>
    <property type="match status" value="1"/>
</dbReference>
<dbReference type="PANTHER" id="PTHR35794">
    <property type="entry name" value="CELL DIVISION PROTEIN DIVIVA"/>
    <property type="match status" value="1"/>
</dbReference>
<dbReference type="Pfam" id="PF05103">
    <property type="entry name" value="DivIVA"/>
    <property type="match status" value="1"/>
</dbReference>
<dbReference type="PIRSF" id="PIRSF029938">
    <property type="entry name" value="UCP029938"/>
    <property type="match status" value="1"/>
</dbReference>
<accession>C3P5S9</accession>
<organism>
    <name type="scientific">Bacillus anthracis (strain A0248)</name>
    <dbReference type="NCBI Taxonomy" id="592021"/>
    <lineage>
        <taxon>Bacteria</taxon>
        <taxon>Bacillati</taxon>
        <taxon>Bacillota</taxon>
        <taxon>Bacilli</taxon>
        <taxon>Bacillales</taxon>
        <taxon>Bacillaceae</taxon>
        <taxon>Bacillus</taxon>
        <taxon>Bacillus cereus group</taxon>
    </lineage>
</organism>
<sequence>MISDKIKLTAKDILEKEFKTGMRGYQQEEVDKFLDMIIKDYEAFHKEFEQLKQQNARLKRELEEQKLAATQVPQQPVVQTPVAQPVYNNTNTDILKRLSNLEKAVFGSKLYE</sequence>
<feature type="chain" id="PRO_1000189486" description="Cell cycle protein GpsB">
    <location>
        <begin position="1"/>
        <end position="112"/>
    </location>
</feature>
<feature type="coiled-coil region" evidence="1">
    <location>
        <begin position="38"/>
        <end position="72"/>
    </location>
</feature>
<gene>
    <name evidence="1" type="primary">gpsB</name>
    <name type="ordered locus">BAA_1649</name>
</gene>
<protein>
    <recommendedName>
        <fullName evidence="1">Cell cycle protein GpsB</fullName>
    </recommendedName>
    <alternativeName>
        <fullName evidence="1">Guiding PBP1-shuttling protein</fullName>
    </alternativeName>
</protein>
<reference key="1">
    <citation type="submission" date="2009-04" db="EMBL/GenBank/DDBJ databases">
        <title>Genome sequence of Bacillus anthracis A0248.</title>
        <authorList>
            <person name="Dodson R.J."/>
            <person name="Munk A.C."/>
            <person name="Bruce D."/>
            <person name="Detter C."/>
            <person name="Tapia R."/>
            <person name="Sutton G."/>
            <person name="Sims D."/>
            <person name="Brettin T."/>
        </authorList>
    </citation>
    <scope>NUCLEOTIDE SEQUENCE [LARGE SCALE GENOMIC DNA]</scope>
    <source>
        <strain>A0248</strain>
    </source>
</reference>
<comment type="function">
    <text evidence="1">Divisome component that associates with the complex late in its assembly, after the Z-ring is formed, and is dependent on DivIC and PBP2B for its recruitment to the divisome. Together with EzrA, is a key component of the system that regulates PBP1 localization during cell cycle progression. Its main role could be the removal of PBP1 from the cell pole after pole maturation is completed. Also contributes to the recruitment of PBP1 to the division complex. Not essential for septum formation.</text>
</comment>
<comment type="subunit">
    <text evidence="1">Forms polymers through the coiled coil domains. Interacts with PBP1, MreC and EzrA.</text>
</comment>
<comment type="subcellular location">
    <subcellularLocation>
        <location evidence="1">Cytoplasm</location>
    </subcellularLocation>
    <text evidence="1">Shuttles between the lateral wall and the division site in a cell cycle-dependent manner.</text>
</comment>
<comment type="similarity">
    <text evidence="1">Belongs to the GpsB family.</text>
</comment>
<name>GPSB_BACAA</name>
<proteinExistence type="inferred from homology"/>
<evidence type="ECO:0000255" key="1">
    <source>
        <dbReference type="HAMAP-Rule" id="MF_02011"/>
    </source>
</evidence>